<proteinExistence type="inferred from homology"/>
<sequence length="148" mass="17532">MKEIVSKVKEIAESACKKYNLELFDIKYYNKSGKWFLEIVIDNPLDYVSTKDCENISREVEFQLDKLDIIPQRYYLTVSSPGLDRPLRSIDDFKRFINNKVKIKLENETIIGYIKDVKDSVIFLEENNKKIKEIKYNQIKKANLEIDI</sequence>
<gene>
    <name evidence="1" type="primary">rimP</name>
    <name type="ordered locus">THA_1728</name>
</gene>
<protein>
    <recommendedName>
        <fullName evidence="1">Ribosome maturation factor RimP</fullName>
    </recommendedName>
</protein>
<comment type="function">
    <text evidence="1">Required for maturation of 30S ribosomal subunits.</text>
</comment>
<comment type="subcellular location">
    <subcellularLocation>
        <location evidence="1">Cytoplasm</location>
    </subcellularLocation>
</comment>
<comment type="similarity">
    <text evidence="1">Belongs to the RimP family.</text>
</comment>
<feature type="chain" id="PRO_0000384798" description="Ribosome maturation factor RimP">
    <location>
        <begin position="1"/>
        <end position="148"/>
    </location>
</feature>
<dbReference type="EMBL" id="CP001185">
    <property type="protein sequence ID" value="ACJ76164.1"/>
    <property type="molecule type" value="Genomic_DNA"/>
</dbReference>
<dbReference type="RefSeq" id="WP_004102604.1">
    <property type="nucleotide sequence ID" value="NC_011653.1"/>
</dbReference>
<dbReference type="SMR" id="B7IDT7"/>
<dbReference type="STRING" id="484019.THA_1728"/>
<dbReference type="KEGG" id="taf:THA_1728"/>
<dbReference type="eggNOG" id="COG0779">
    <property type="taxonomic scope" value="Bacteria"/>
</dbReference>
<dbReference type="HOGENOM" id="CLU_070525_2_2_0"/>
<dbReference type="OrthoDB" id="9805006at2"/>
<dbReference type="Proteomes" id="UP000002453">
    <property type="component" value="Chromosome"/>
</dbReference>
<dbReference type="GO" id="GO:0005829">
    <property type="term" value="C:cytosol"/>
    <property type="evidence" value="ECO:0007669"/>
    <property type="project" value="TreeGrafter"/>
</dbReference>
<dbReference type="GO" id="GO:0000028">
    <property type="term" value="P:ribosomal small subunit assembly"/>
    <property type="evidence" value="ECO:0007669"/>
    <property type="project" value="TreeGrafter"/>
</dbReference>
<dbReference type="GO" id="GO:0006412">
    <property type="term" value="P:translation"/>
    <property type="evidence" value="ECO:0007669"/>
    <property type="project" value="TreeGrafter"/>
</dbReference>
<dbReference type="CDD" id="cd01734">
    <property type="entry name" value="YlxS_C"/>
    <property type="match status" value="1"/>
</dbReference>
<dbReference type="FunFam" id="3.30.300.70:FF:000001">
    <property type="entry name" value="Ribosome maturation factor RimP"/>
    <property type="match status" value="1"/>
</dbReference>
<dbReference type="Gene3D" id="2.30.30.180">
    <property type="entry name" value="Ribosome maturation factor RimP, C-terminal domain"/>
    <property type="match status" value="1"/>
</dbReference>
<dbReference type="Gene3D" id="3.30.300.70">
    <property type="entry name" value="RimP-like superfamily, N-terminal"/>
    <property type="match status" value="1"/>
</dbReference>
<dbReference type="HAMAP" id="MF_01077">
    <property type="entry name" value="RimP"/>
    <property type="match status" value="1"/>
</dbReference>
<dbReference type="InterPro" id="IPR003728">
    <property type="entry name" value="Ribosome_maturation_RimP"/>
</dbReference>
<dbReference type="InterPro" id="IPR028998">
    <property type="entry name" value="RimP_C"/>
</dbReference>
<dbReference type="InterPro" id="IPR036847">
    <property type="entry name" value="RimP_C_sf"/>
</dbReference>
<dbReference type="InterPro" id="IPR028989">
    <property type="entry name" value="RimP_N"/>
</dbReference>
<dbReference type="InterPro" id="IPR035956">
    <property type="entry name" value="RimP_N_sf"/>
</dbReference>
<dbReference type="PANTHER" id="PTHR33867">
    <property type="entry name" value="RIBOSOME MATURATION FACTOR RIMP"/>
    <property type="match status" value="1"/>
</dbReference>
<dbReference type="PANTHER" id="PTHR33867:SF1">
    <property type="entry name" value="RIBOSOME MATURATION FACTOR RIMP"/>
    <property type="match status" value="1"/>
</dbReference>
<dbReference type="Pfam" id="PF17384">
    <property type="entry name" value="DUF150_C"/>
    <property type="match status" value="1"/>
</dbReference>
<dbReference type="Pfam" id="PF02576">
    <property type="entry name" value="RimP_N"/>
    <property type="match status" value="1"/>
</dbReference>
<dbReference type="SUPFAM" id="SSF74942">
    <property type="entry name" value="YhbC-like, C-terminal domain"/>
    <property type="match status" value="1"/>
</dbReference>
<dbReference type="SUPFAM" id="SSF75420">
    <property type="entry name" value="YhbC-like, N-terminal domain"/>
    <property type="match status" value="1"/>
</dbReference>
<name>RIMP_THEAB</name>
<evidence type="ECO:0000255" key="1">
    <source>
        <dbReference type="HAMAP-Rule" id="MF_01077"/>
    </source>
</evidence>
<reference key="1">
    <citation type="journal article" date="2009" name="J. Bacteriol.">
        <title>The genome of Thermosipho africanus TCF52B: lateral genetic connections to the Firmicutes and Archaea.</title>
        <authorList>
            <person name="Nesboe C.L."/>
            <person name="Bapteste E."/>
            <person name="Curtis B."/>
            <person name="Dahle H."/>
            <person name="Lopez P."/>
            <person name="Macleod D."/>
            <person name="Dlutek M."/>
            <person name="Bowman S."/>
            <person name="Zhaxybayeva O."/>
            <person name="Birkeland N.-K."/>
            <person name="Doolittle W.F."/>
        </authorList>
    </citation>
    <scope>NUCLEOTIDE SEQUENCE [LARGE SCALE GENOMIC DNA]</scope>
    <source>
        <strain>TCF52B</strain>
    </source>
</reference>
<accession>B7IDT7</accession>
<organism>
    <name type="scientific">Thermosipho africanus (strain TCF52B)</name>
    <dbReference type="NCBI Taxonomy" id="484019"/>
    <lineage>
        <taxon>Bacteria</taxon>
        <taxon>Thermotogati</taxon>
        <taxon>Thermotogota</taxon>
        <taxon>Thermotogae</taxon>
        <taxon>Thermotogales</taxon>
        <taxon>Fervidobacteriaceae</taxon>
        <taxon>Thermosipho</taxon>
    </lineage>
</organism>
<keyword id="KW-0963">Cytoplasm</keyword>
<keyword id="KW-1185">Reference proteome</keyword>
<keyword id="KW-0690">Ribosome biogenesis</keyword>